<proteinExistence type="evidence at transcript level"/>
<evidence type="ECO:0000250" key="1"/>
<evidence type="ECO:0000269" key="2">
    <source>
    </source>
</evidence>
<evidence type="ECO:0000269" key="3">
    <source>
    </source>
</evidence>
<evidence type="ECO:0000305" key="4"/>
<organism>
    <name type="scientific">Arabidopsis thaliana</name>
    <name type="common">Mouse-ear cress</name>
    <dbReference type="NCBI Taxonomy" id="3702"/>
    <lineage>
        <taxon>Eukaryota</taxon>
        <taxon>Viridiplantae</taxon>
        <taxon>Streptophyta</taxon>
        <taxon>Embryophyta</taxon>
        <taxon>Tracheophyta</taxon>
        <taxon>Spermatophyta</taxon>
        <taxon>Magnoliopsida</taxon>
        <taxon>eudicotyledons</taxon>
        <taxon>Gunneridae</taxon>
        <taxon>Pentapetalae</taxon>
        <taxon>rosids</taxon>
        <taxon>malvids</taxon>
        <taxon>Brassicales</taxon>
        <taxon>Brassicaceae</taxon>
        <taxon>Camelineae</taxon>
        <taxon>Arabidopsis</taxon>
    </lineage>
</organism>
<keyword id="KW-0131">Cell cycle</keyword>
<keyword id="KW-0132">Cell division</keyword>
<keyword id="KW-0498">Mitosis</keyword>
<keyword id="KW-0539">Nucleus</keyword>
<keyword id="KW-1185">Reference proteome</keyword>
<keyword id="KW-0677">Repeat</keyword>
<keyword id="KW-0802">TPR repeat</keyword>
<keyword id="KW-0833">Ubl conjugation pathway</keyword>
<reference key="1">
    <citation type="journal article" date="2003" name="Plant J.">
        <title>The NOMEGA gene required for female gametophyte development encodes the putative APC6/CDC16 component of the anaphase promoting complex in Arabidopsis.</title>
        <authorList>
            <person name="Kwee H.S."/>
            <person name="Sundaresan V."/>
        </authorList>
    </citation>
    <scope>NUCLEOTIDE SEQUENCE [MRNA]</scope>
    <scope>FUNCTION</scope>
    <scope>TISSUE SPECIFICITY</scope>
    <scope>DISRUPTION PHENOTYPE</scope>
    <source>
        <strain>cv. Landsberg erecta</strain>
        <tissue>Flower</tissue>
    </source>
</reference>
<reference key="2">
    <citation type="journal article" date="2000" name="Nature">
        <title>Sequence and analysis of chromosome 1 of the plant Arabidopsis thaliana.</title>
        <authorList>
            <person name="Theologis A."/>
            <person name="Ecker J.R."/>
            <person name="Palm C.J."/>
            <person name="Federspiel N.A."/>
            <person name="Kaul S."/>
            <person name="White O."/>
            <person name="Alonso J."/>
            <person name="Altafi H."/>
            <person name="Araujo R."/>
            <person name="Bowman C.L."/>
            <person name="Brooks S.Y."/>
            <person name="Buehler E."/>
            <person name="Chan A."/>
            <person name="Chao Q."/>
            <person name="Chen H."/>
            <person name="Cheuk R.F."/>
            <person name="Chin C.W."/>
            <person name="Chung M.K."/>
            <person name="Conn L."/>
            <person name="Conway A.B."/>
            <person name="Conway A.R."/>
            <person name="Creasy T.H."/>
            <person name="Dewar K."/>
            <person name="Dunn P."/>
            <person name="Etgu P."/>
            <person name="Feldblyum T.V."/>
            <person name="Feng J.-D."/>
            <person name="Fong B."/>
            <person name="Fujii C.Y."/>
            <person name="Gill J.E."/>
            <person name="Goldsmith A.D."/>
            <person name="Haas B."/>
            <person name="Hansen N.F."/>
            <person name="Hughes B."/>
            <person name="Huizar L."/>
            <person name="Hunter J.L."/>
            <person name="Jenkins J."/>
            <person name="Johnson-Hopson C."/>
            <person name="Khan S."/>
            <person name="Khaykin E."/>
            <person name="Kim C.J."/>
            <person name="Koo H.L."/>
            <person name="Kremenetskaia I."/>
            <person name="Kurtz D.B."/>
            <person name="Kwan A."/>
            <person name="Lam B."/>
            <person name="Langin-Hooper S."/>
            <person name="Lee A."/>
            <person name="Lee J.M."/>
            <person name="Lenz C.A."/>
            <person name="Li J.H."/>
            <person name="Li Y.-P."/>
            <person name="Lin X."/>
            <person name="Liu S.X."/>
            <person name="Liu Z.A."/>
            <person name="Luros J.S."/>
            <person name="Maiti R."/>
            <person name="Marziali A."/>
            <person name="Militscher J."/>
            <person name="Miranda M."/>
            <person name="Nguyen M."/>
            <person name="Nierman W.C."/>
            <person name="Osborne B.I."/>
            <person name="Pai G."/>
            <person name="Peterson J."/>
            <person name="Pham P.K."/>
            <person name="Rizzo M."/>
            <person name="Rooney T."/>
            <person name="Rowley D."/>
            <person name="Sakano H."/>
            <person name="Salzberg S.L."/>
            <person name="Schwartz J.R."/>
            <person name="Shinn P."/>
            <person name="Southwick A.M."/>
            <person name="Sun H."/>
            <person name="Tallon L.J."/>
            <person name="Tambunga G."/>
            <person name="Toriumi M.J."/>
            <person name="Town C.D."/>
            <person name="Utterback T."/>
            <person name="Van Aken S."/>
            <person name="Vaysberg M."/>
            <person name="Vysotskaia V.S."/>
            <person name="Walker M."/>
            <person name="Wu D."/>
            <person name="Yu G."/>
            <person name="Fraser C.M."/>
            <person name="Venter J.C."/>
            <person name="Davis R.W."/>
        </authorList>
    </citation>
    <scope>NUCLEOTIDE SEQUENCE [LARGE SCALE GENOMIC DNA]</scope>
    <source>
        <strain>cv. Columbia</strain>
    </source>
</reference>
<reference key="3">
    <citation type="journal article" date="2017" name="Plant J.">
        <title>Araport11: a complete reannotation of the Arabidopsis thaliana reference genome.</title>
        <authorList>
            <person name="Cheng C.Y."/>
            <person name="Krishnakumar V."/>
            <person name="Chan A.P."/>
            <person name="Thibaud-Nissen F."/>
            <person name="Schobel S."/>
            <person name="Town C.D."/>
        </authorList>
    </citation>
    <scope>GENOME REANNOTATION</scope>
    <source>
        <strain>cv. Columbia</strain>
    </source>
</reference>
<reference key="4">
    <citation type="submission" date="2008-06" db="EMBL/GenBank/DDBJ databases">
        <title>Arabidopsis ORF clones.</title>
        <authorList>
            <person name="De Los Reyes C."/>
            <person name="Quan R."/>
            <person name="Chen H."/>
            <person name="Bautista V.R."/>
            <person name="Kim C.J."/>
            <person name="Ecker J.R."/>
        </authorList>
    </citation>
    <scope>NUCLEOTIDE SEQUENCE [LARGE SCALE MRNA]</scope>
    <source>
        <strain>cv. Columbia</strain>
    </source>
</reference>
<reference key="5">
    <citation type="submission" date="2002-03" db="EMBL/GenBank/DDBJ databases">
        <title>Full-length cDNA from Arabidopsis thaliana.</title>
        <authorList>
            <person name="Brover V.V."/>
            <person name="Troukhan M.E."/>
            <person name="Alexandrov N.A."/>
            <person name="Lu Y.-P."/>
            <person name="Flavell R.B."/>
            <person name="Feldmann K.A."/>
        </authorList>
    </citation>
    <scope>NUCLEOTIDE SEQUENCE [LARGE SCALE MRNA] OF 376-543</scope>
</reference>
<reference key="6">
    <citation type="journal article" date="2002" name="Science">
        <title>Functional annotation of a full-length Arabidopsis cDNA collection.</title>
        <authorList>
            <person name="Seki M."/>
            <person name="Narusaka M."/>
            <person name="Kamiya A."/>
            <person name="Ishida J."/>
            <person name="Satou M."/>
            <person name="Sakurai T."/>
            <person name="Nakajima M."/>
            <person name="Enju A."/>
            <person name="Akiyama K."/>
            <person name="Oono Y."/>
            <person name="Muramatsu M."/>
            <person name="Hayashizaki Y."/>
            <person name="Kawai J."/>
            <person name="Carninci P."/>
            <person name="Itoh M."/>
            <person name="Ishii Y."/>
            <person name="Arakawa T."/>
            <person name="Shibata K."/>
            <person name="Shinagawa A."/>
            <person name="Shinozaki K."/>
        </authorList>
    </citation>
    <scope>NUCLEOTIDE SEQUENCE [LARGE SCALE MRNA] OF 399-543</scope>
    <source>
        <strain>cv. Columbia</strain>
    </source>
</reference>
<reference key="7">
    <citation type="journal article" date="2009" name="Development">
        <title>The APC/C E3 ligase remains active in most post-mitotic Arabidopsis cells and is required for proper vasculature development and organization.</title>
        <authorList>
            <person name="Marrocco K."/>
            <person name="Thomann A."/>
            <person name="Parmentier Y."/>
            <person name="Genschik P."/>
            <person name="Criqui M.C."/>
        </authorList>
    </citation>
    <scope>FUNCTION OF THE APC/C COMPLEX</scope>
</reference>
<sequence>MREEEIEKIRGVVRDCVSKHLYSSAIFFADKVAALTNDPSDIYMQAQALFLGRHYRRAFHLLNASKIVLRDLRFRYLAAKCLEELKEWDQCLLMLGDAKVDDDGIVYDAKDGNVIDFDKDGEDREINISSAICFLRGKAYGALQNRSQARQWYKAAIKADPLCYEALECLIESHMLTSEEESSLLSSLQFSPEDGWLSSFYSCLIKKYDKESTVELKFKKLENETSGSVSGSSMITLANNTDLLACKAEYYHQCCEYQKCFELTAALLEKDPFHLKCTLVHLAAAMELGNSNELYLMACNLVKDYPSKALSWFAVGCYYYCIKKYAEARRYFSKATGIDGSFSPARIGYGNSFAAQEEGDQAMSAYRTAARLFPGCHLPTLYIGMEYMRTHSYKLADQFFMQAKAICPSDPLVYNELGVVAYHMKEYGKAVRWFEKTLAHIPSALTESWEPTVVNLAHAYRKLRKDREAISYYERALTLSTKSLSTYSGLAYTYHLQGNFSAAISYYHKALWLKPDDQFCTEMLNVALMDECQNGVDSKVELC</sequence>
<name>CDC16_ARATH</name>
<feature type="chain" id="PRO_0000396844" description="Anaphase-promoting complex subunit 6">
    <location>
        <begin position="1"/>
        <end position="543"/>
    </location>
</feature>
<feature type="repeat" description="TPR 1">
    <location>
        <begin position="7"/>
        <end position="36"/>
    </location>
</feature>
<feature type="repeat" description="TPR 2">
    <location>
        <begin position="39"/>
        <end position="64"/>
    </location>
</feature>
<feature type="repeat" description="TPR 3">
    <location>
        <begin position="72"/>
        <end position="95"/>
    </location>
</feature>
<feature type="repeat" description="TPR 4">
    <location>
        <begin position="128"/>
        <end position="159"/>
    </location>
</feature>
<feature type="repeat" description="TPR 5">
    <location>
        <begin position="164"/>
        <end position="187"/>
    </location>
</feature>
<feature type="repeat" description="TPR 6">
    <location>
        <begin position="194"/>
        <end position="232"/>
    </location>
</feature>
<feature type="repeat" description="TPR 7">
    <location>
        <begin position="242"/>
        <end position="270"/>
    </location>
</feature>
<feature type="repeat" description="TPR 8">
    <location>
        <begin position="277"/>
        <end position="304"/>
    </location>
</feature>
<feature type="repeat" description="TPR 9">
    <location>
        <begin position="309"/>
        <end position="338"/>
    </location>
</feature>
<feature type="repeat" description="TPR 10">
    <location>
        <begin position="343"/>
        <end position="371"/>
    </location>
</feature>
<feature type="repeat" description="TPR 11">
    <location>
        <begin position="378"/>
        <end position="406"/>
    </location>
</feature>
<feature type="repeat" description="TPR 12">
    <location>
        <begin position="411"/>
        <end position="443"/>
    </location>
</feature>
<feature type="repeat" description="TPR 13">
    <location>
        <begin position="447"/>
        <end position="479"/>
    </location>
</feature>
<feature type="repeat" description="TPR 14">
    <location>
        <begin position="484"/>
        <end position="513"/>
    </location>
</feature>
<comment type="function">
    <text evidence="2 3">Component of the anaphase promoting complex/cyclosome (APC/C), a cell cycle-regulated E3 ubiquitin-protein ligase complex that controls progression through mitosis and the G1 phase of the cell cycle. The APC/C complex controls several key steps in the cell cycle by mediating ubiquitination and subsequent degradation of target proteins such as cyclins. The APC/C complex is required for the female gametophyte development and is involved in several aspect of development by controlling cell division and cell elongation. Involved in the control of endoreduplication.</text>
</comment>
<comment type="pathway">
    <text>Protein modification; protein ubiquitination.</text>
</comment>
<comment type="subunit">
    <text>The APC/C is composed of at least 10 subunits.</text>
</comment>
<comment type="subcellular location">
    <subcellularLocation>
        <location evidence="1">Nucleus</location>
    </subcellularLocation>
</comment>
<comment type="tissue specificity">
    <text evidence="2">Widely expressed.</text>
</comment>
<comment type="disruption phenotype">
    <text evidence="2">Gametophytic lethal phenotype.</text>
</comment>
<comment type="similarity">
    <text evidence="4">Belongs to the APC6/CDC16 family.</text>
</comment>
<comment type="sequence caution" evidence="4">
    <conflict type="erroneous gene model prediction">
        <sequence resource="EMBL-CDS" id="AAC83033"/>
    </conflict>
</comment>
<comment type="sequence caution" evidence="4">
    <conflict type="erroneous initiation">
        <sequence resource="EMBL-CDS" id="AAM62610"/>
    </conflict>
    <text>Truncated N-terminus.</text>
</comment>
<gene>
    <name type="primary">APC6</name>
    <name type="synonym">CDC16</name>
    <name type="ordered locus">At1g78770</name>
    <name type="ORF">F9K20.19</name>
</gene>
<accession>B3DNN5</accession>
<accession>Q8GXT0</accession>
<accession>Q8L5J4</accession>
<accession>Q8LEK0</accession>
<accession>Q9ZV95</accession>
<dbReference type="EMBL" id="AF529177">
    <property type="protein sequence ID" value="AAM95623.1"/>
    <property type="molecule type" value="mRNA"/>
</dbReference>
<dbReference type="EMBL" id="AC005679">
    <property type="protein sequence ID" value="AAC83033.1"/>
    <property type="status" value="ALT_SEQ"/>
    <property type="molecule type" value="Genomic_DNA"/>
</dbReference>
<dbReference type="EMBL" id="CP002684">
    <property type="protein sequence ID" value="AEE36148.1"/>
    <property type="molecule type" value="Genomic_DNA"/>
</dbReference>
<dbReference type="EMBL" id="BT033023">
    <property type="protein sequence ID" value="ACE62891.1"/>
    <property type="molecule type" value="mRNA"/>
</dbReference>
<dbReference type="EMBL" id="AY085381">
    <property type="protein sequence ID" value="AAM62610.1"/>
    <property type="status" value="ALT_INIT"/>
    <property type="molecule type" value="mRNA"/>
</dbReference>
<dbReference type="EMBL" id="AK118058">
    <property type="protein sequence ID" value="BAC42689.1"/>
    <property type="molecule type" value="mRNA"/>
</dbReference>
<dbReference type="PIR" id="G96816">
    <property type="entry name" value="G96816"/>
</dbReference>
<dbReference type="RefSeq" id="NP_565188.1">
    <property type="nucleotide sequence ID" value="NM_106524.2"/>
</dbReference>
<dbReference type="SMR" id="B3DNN5"/>
<dbReference type="BioGRID" id="29432">
    <property type="interactions" value="14"/>
</dbReference>
<dbReference type="FunCoup" id="B3DNN5">
    <property type="interactions" value="4129"/>
</dbReference>
<dbReference type="IntAct" id="B3DNN5">
    <property type="interactions" value="14"/>
</dbReference>
<dbReference type="STRING" id="3702.B3DNN5"/>
<dbReference type="PaxDb" id="3702-AT1G78770.1"/>
<dbReference type="ProteomicsDB" id="224387"/>
<dbReference type="EnsemblPlants" id="AT1G78770.1">
    <property type="protein sequence ID" value="AT1G78770.1"/>
    <property type="gene ID" value="AT1G78770"/>
</dbReference>
<dbReference type="GeneID" id="844213"/>
<dbReference type="Gramene" id="AT1G78770.1">
    <property type="protein sequence ID" value="AT1G78770.1"/>
    <property type="gene ID" value="AT1G78770"/>
</dbReference>
<dbReference type="KEGG" id="ath:AT1G78770"/>
<dbReference type="Araport" id="AT1G78770"/>
<dbReference type="TAIR" id="AT1G78770">
    <property type="gene designation" value="APC6"/>
</dbReference>
<dbReference type="eggNOG" id="KOG1173">
    <property type="taxonomic scope" value="Eukaryota"/>
</dbReference>
<dbReference type="HOGENOM" id="CLU_011751_3_1_1"/>
<dbReference type="InParanoid" id="B3DNN5"/>
<dbReference type="OMA" id="DPFHNNA"/>
<dbReference type="OrthoDB" id="10006270at2759"/>
<dbReference type="PhylomeDB" id="B3DNN5"/>
<dbReference type="UniPathway" id="UPA00143"/>
<dbReference type="PRO" id="PR:B3DNN5"/>
<dbReference type="Proteomes" id="UP000006548">
    <property type="component" value="Chromosome 1"/>
</dbReference>
<dbReference type="ExpressionAtlas" id="B3DNN5">
    <property type="expression patterns" value="baseline and differential"/>
</dbReference>
<dbReference type="GO" id="GO:0005634">
    <property type="term" value="C:nucleus"/>
    <property type="evidence" value="ECO:0007669"/>
    <property type="project" value="UniProtKB-SubCell"/>
</dbReference>
<dbReference type="GO" id="GO:0051301">
    <property type="term" value="P:cell division"/>
    <property type="evidence" value="ECO:0007669"/>
    <property type="project" value="UniProtKB-KW"/>
</dbReference>
<dbReference type="GO" id="GO:0010087">
    <property type="term" value="P:phloem or xylem histogenesis"/>
    <property type="evidence" value="ECO:0000315"/>
    <property type="project" value="TAIR"/>
</dbReference>
<dbReference type="GO" id="GO:0016567">
    <property type="term" value="P:protein ubiquitination"/>
    <property type="evidence" value="ECO:0007669"/>
    <property type="project" value="UniProtKB-UniPathway"/>
</dbReference>
<dbReference type="GO" id="GO:0032875">
    <property type="term" value="P:regulation of DNA endoreduplication"/>
    <property type="evidence" value="ECO:0000315"/>
    <property type="project" value="TAIR"/>
</dbReference>
<dbReference type="Gene3D" id="1.25.40.10">
    <property type="entry name" value="Tetratricopeptide repeat domain"/>
    <property type="match status" value="1"/>
</dbReference>
<dbReference type="InterPro" id="IPR011990">
    <property type="entry name" value="TPR-like_helical_dom_sf"/>
</dbReference>
<dbReference type="InterPro" id="IPR019734">
    <property type="entry name" value="TPR_rpt"/>
</dbReference>
<dbReference type="PANTHER" id="PTHR12558">
    <property type="entry name" value="CELL DIVISION CYCLE 16,23,27"/>
    <property type="match status" value="1"/>
</dbReference>
<dbReference type="PANTHER" id="PTHR12558:SF9">
    <property type="entry name" value="CELL DIVISION CYCLE PROTEIN 16 HOMOLOG"/>
    <property type="match status" value="1"/>
</dbReference>
<dbReference type="Pfam" id="PF12895">
    <property type="entry name" value="ANAPC3"/>
    <property type="match status" value="1"/>
</dbReference>
<dbReference type="Pfam" id="PF00515">
    <property type="entry name" value="TPR_1"/>
    <property type="match status" value="1"/>
</dbReference>
<dbReference type="Pfam" id="PF13176">
    <property type="entry name" value="TPR_7"/>
    <property type="match status" value="1"/>
</dbReference>
<dbReference type="Pfam" id="PF13181">
    <property type="entry name" value="TPR_8"/>
    <property type="match status" value="1"/>
</dbReference>
<dbReference type="SMART" id="SM00028">
    <property type="entry name" value="TPR"/>
    <property type="match status" value="8"/>
</dbReference>
<dbReference type="SUPFAM" id="SSF81901">
    <property type="entry name" value="HCP-like"/>
    <property type="match status" value="1"/>
</dbReference>
<dbReference type="SUPFAM" id="SSF48452">
    <property type="entry name" value="TPR-like"/>
    <property type="match status" value="2"/>
</dbReference>
<dbReference type="PROSITE" id="PS50005">
    <property type="entry name" value="TPR"/>
    <property type="match status" value="7"/>
</dbReference>
<dbReference type="PROSITE" id="PS50293">
    <property type="entry name" value="TPR_REGION"/>
    <property type="match status" value="1"/>
</dbReference>
<protein>
    <recommendedName>
        <fullName>Anaphase-promoting complex subunit 6</fullName>
    </recommendedName>
    <alternativeName>
        <fullName>Cell division cycle protein 16 homolog</fullName>
        <shortName>CDC16 homolog</shortName>
    </alternativeName>
    <alternativeName>
        <fullName>Cyclosome subunit 6</fullName>
    </alternativeName>
    <alternativeName>
        <fullName>Protein NOMEGA</fullName>
    </alternativeName>
</protein>